<evidence type="ECO:0000255" key="1">
    <source>
        <dbReference type="HAMAP-Rule" id="MF_00537"/>
    </source>
</evidence>
<evidence type="ECO:0000256" key="2">
    <source>
        <dbReference type="SAM" id="MobiDB-lite"/>
    </source>
</evidence>
<evidence type="ECO:0000305" key="3"/>
<sequence>MAKTSSVEKNNRRRKLADQYGPKRAALKAIIMDQSKPMEERFRAQLKLAALPRNSAKIRIRNRCEVTGRPRAYYRKLKVSRIALRDLGNNGQIPGLVKSSW</sequence>
<dbReference type="EMBL" id="BA000012">
    <property type="protein sequence ID" value="BAB47919.1"/>
    <property type="molecule type" value="Genomic_DNA"/>
</dbReference>
<dbReference type="RefSeq" id="WP_010909282.1">
    <property type="nucleotide sequence ID" value="NC_002678.2"/>
</dbReference>
<dbReference type="SMR" id="Q98N44"/>
<dbReference type="GeneID" id="66684203"/>
<dbReference type="KEGG" id="mlo:mlr0309"/>
<dbReference type="eggNOG" id="COG0199">
    <property type="taxonomic scope" value="Bacteria"/>
</dbReference>
<dbReference type="HOGENOM" id="CLU_139869_0_1_5"/>
<dbReference type="Proteomes" id="UP000000552">
    <property type="component" value="Chromosome"/>
</dbReference>
<dbReference type="GO" id="GO:0005737">
    <property type="term" value="C:cytoplasm"/>
    <property type="evidence" value="ECO:0007669"/>
    <property type="project" value="UniProtKB-ARBA"/>
</dbReference>
<dbReference type="GO" id="GO:0015935">
    <property type="term" value="C:small ribosomal subunit"/>
    <property type="evidence" value="ECO:0007669"/>
    <property type="project" value="TreeGrafter"/>
</dbReference>
<dbReference type="GO" id="GO:0019843">
    <property type="term" value="F:rRNA binding"/>
    <property type="evidence" value="ECO:0007669"/>
    <property type="project" value="UniProtKB-UniRule"/>
</dbReference>
<dbReference type="GO" id="GO:0003735">
    <property type="term" value="F:structural constituent of ribosome"/>
    <property type="evidence" value="ECO:0007669"/>
    <property type="project" value="InterPro"/>
</dbReference>
<dbReference type="GO" id="GO:0006412">
    <property type="term" value="P:translation"/>
    <property type="evidence" value="ECO:0007669"/>
    <property type="project" value="UniProtKB-UniRule"/>
</dbReference>
<dbReference type="FunFam" id="1.10.287.1480:FF:000001">
    <property type="entry name" value="30S ribosomal protein S14"/>
    <property type="match status" value="1"/>
</dbReference>
<dbReference type="Gene3D" id="1.10.287.1480">
    <property type="match status" value="1"/>
</dbReference>
<dbReference type="HAMAP" id="MF_00537">
    <property type="entry name" value="Ribosomal_uS14_1"/>
    <property type="match status" value="1"/>
</dbReference>
<dbReference type="InterPro" id="IPR001209">
    <property type="entry name" value="Ribosomal_uS14"/>
</dbReference>
<dbReference type="InterPro" id="IPR023036">
    <property type="entry name" value="Ribosomal_uS14_bac/plastid"/>
</dbReference>
<dbReference type="InterPro" id="IPR018271">
    <property type="entry name" value="Ribosomal_uS14_CS"/>
</dbReference>
<dbReference type="NCBIfam" id="NF006477">
    <property type="entry name" value="PRK08881.1"/>
    <property type="match status" value="1"/>
</dbReference>
<dbReference type="PANTHER" id="PTHR19836">
    <property type="entry name" value="30S RIBOSOMAL PROTEIN S14"/>
    <property type="match status" value="1"/>
</dbReference>
<dbReference type="PANTHER" id="PTHR19836:SF19">
    <property type="entry name" value="SMALL RIBOSOMAL SUBUNIT PROTEIN US14M"/>
    <property type="match status" value="1"/>
</dbReference>
<dbReference type="Pfam" id="PF00253">
    <property type="entry name" value="Ribosomal_S14"/>
    <property type="match status" value="1"/>
</dbReference>
<dbReference type="SUPFAM" id="SSF57716">
    <property type="entry name" value="Glucocorticoid receptor-like (DNA-binding domain)"/>
    <property type="match status" value="1"/>
</dbReference>
<dbReference type="PROSITE" id="PS00527">
    <property type="entry name" value="RIBOSOMAL_S14"/>
    <property type="match status" value="1"/>
</dbReference>
<gene>
    <name evidence="1" type="primary">rpsN</name>
    <name type="ordered locus">mlr0309</name>
</gene>
<proteinExistence type="inferred from homology"/>
<protein>
    <recommendedName>
        <fullName evidence="1">Small ribosomal subunit protein uS14</fullName>
    </recommendedName>
    <alternativeName>
        <fullName evidence="3">30S ribosomal protein S14</fullName>
    </alternativeName>
</protein>
<name>RS14_RHILO</name>
<feature type="chain" id="PRO_0000130919" description="Small ribosomal subunit protein uS14">
    <location>
        <begin position="1"/>
        <end position="101"/>
    </location>
</feature>
<feature type="region of interest" description="Disordered" evidence="2">
    <location>
        <begin position="1"/>
        <end position="21"/>
    </location>
</feature>
<reference key="1">
    <citation type="journal article" date="2000" name="DNA Res.">
        <title>Complete genome structure of the nitrogen-fixing symbiotic bacterium Mesorhizobium loti.</title>
        <authorList>
            <person name="Kaneko T."/>
            <person name="Nakamura Y."/>
            <person name="Sato S."/>
            <person name="Asamizu E."/>
            <person name="Kato T."/>
            <person name="Sasamoto S."/>
            <person name="Watanabe A."/>
            <person name="Idesawa K."/>
            <person name="Ishikawa A."/>
            <person name="Kawashima K."/>
            <person name="Kimura T."/>
            <person name="Kishida Y."/>
            <person name="Kiyokawa C."/>
            <person name="Kohara M."/>
            <person name="Matsumoto M."/>
            <person name="Matsuno A."/>
            <person name="Mochizuki Y."/>
            <person name="Nakayama S."/>
            <person name="Nakazaki N."/>
            <person name="Shimpo S."/>
            <person name="Sugimoto M."/>
            <person name="Takeuchi C."/>
            <person name="Yamada M."/>
            <person name="Tabata S."/>
        </authorList>
    </citation>
    <scope>NUCLEOTIDE SEQUENCE [LARGE SCALE GENOMIC DNA]</scope>
    <source>
        <strain>LMG 29417 / CECT 9101 / MAFF 303099</strain>
    </source>
</reference>
<organism>
    <name type="scientific">Mesorhizobium japonicum (strain LMG 29417 / CECT 9101 / MAFF 303099)</name>
    <name type="common">Mesorhizobium loti (strain MAFF 303099)</name>
    <dbReference type="NCBI Taxonomy" id="266835"/>
    <lineage>
        <taxon>Bacteria</taxon>
        <taxon>Pseudomonadati</taxon>
        <taxon>Pseudomonadota</taxon>
        <taxon>Alphaproteobacteria</taxon>
        <taxon>Hyphomicrobiales</taxon>
        <taxon>Phyllobacteriaceae</taxon>
        <taxon>Mesorhizobium</taxon>
    </lineage>
</organism>
<comment type="function">
    <text evidence="1">Binds 16S rRNA, required for the assembly of 30S particles and may also be responsible for determining the conformation of the 16S rRNA at the A site.</text>
</comment>
<comment type="subunit">
    <text evidence="1">Part of the 30S ribosomal subunit. Contacts proteins S3 and S10.</text>
</comment>
<comment type="similarity">
    <text evidence="1">Belongs to the universal ribosomal protein uS14 family.</text>
</comment>
<accession>Q98N44</accession>
<keyword id="KW-0687">Ribonucleoprotein</keyword>
<keyword id="KW-0689">Ribosomal protein</keyword>
<keyword id="KW-0694">RNA-binding</keyword>
<keyword id="KW-0699">rRNA-binding</keyword>